<protein>
    <recommendedName>
        <fullName evidence="1">ATP synthase subunit beta</fullName>
        <ecNumber evidence="1">7.1.2.2</ecNumber>
    </recommendedName>
    <alternativeName>
        <fullName evidence="1">ATP synthase F1 sector subunit beta</fullName>
    </alternativeName>
    <alternativeName>
        <fullName evidence="1">F-ATPase subunit beta</fullName>
    </alternativeName>
</protein>
<gene>
    <name evidence="1" type="primary">atpD</name>
    <name type="ordered locus">BMA10229_A1587</name>
</gene>
<dbReference type="EC" id="7.1.2.2" evidence="1"/>
<dbReference type="EMBL" id="CP000546">
    <property type="protein sequence ID" value="ABN01106.1"/>
    <property type="molecule type" value="Genomic_DNA"/>
</dbReference>
<dbReference type="SMR" id="A2S6J8"/>
<dbReference type="KEGG" id="bml:BMA10229_A1587"/>
<dbReference type="HOGENOM" id="CLU_022398_0_2_4"/>
<dbReference type="Proteomes" id="UP000002283">
    <property type="component" value="Chromosome I"/>
</dbReference>
<dbReference type="GO" id="GO:0005886">
    <property type="term" value="C:plasma membrane"/>
    <property type="evidence" value="ECO:0007669"/>
    <property type="project" value="UniProtKB-SubCell"/>
</dbReference>
<dbReference type="GO" id="GO:0045259">
    <property type="term" value="C:proton-transporting ATP synthase complex"/>
    <property type="evidence" value="ECO:0007669"/>
    <property type="project" value="UniProtKB-KW"/>
</dbReference>
<dbReference type="GO" id="GO:0005524">
    <property type="term" value="F:ATP binding"/>
    <property type="evidence" value="ECO:0007669"/>
    <property type="project" value="UniProtKB-UniRule"/>
</dbReference>
<dbReference type="GO" id="GO:0016887">
    <property type="term" value="F:ATP hydrolysis activity"/>
    <property type="evidence" value="ECO:0007669"/>
    <property type="project" value="InterPro"/>
</dbReference>
<dbReference type="GO" id="GO:0046933">
    <property type="term" value="F:proton-transporting ATP synthase activity, rotational mechanism"/>
    <property type="evidence" value="ECO:0007669"/>
    <property type="project" value="UniProtKB-UniRule"/>
</dbReference>
<dbReference type="CDD" id="cd18110">
    <property type="entry name" value="ATP-synt_F1_beta_C"/>
    <property type="match status" value="1"/>
</dbReference>
<dbReference type="CDD" id="cd18115">
    <property type="entry name" value="ATP-synt_F1_beta_N"/>
    <property type="match status" value="1"/>
</dbReference>
<dbReference type="CDD" id="cd01133">
    <property type="entry name" value="F1-ATPase_beta_CD"/>
    <property type="match status" value="1"/>
</dbReference>
<dbReference type="FunFam" id="1.10.1140.10:FF:000001">
    <property type="entry name" value="ATP synthase subunit beta"/>
    <property type="match status" value="1"/>
</dbReference>
<dbReference type="FunFam" id="3.40.50.300:FF:000004">
    <property type="entry name" value="ATP synthase subunit beta"/>
    <property type="match status" value="1"/>
</dbReference>
<dbReference type="Gene3D" id="2.40.10.170">
    <property type="match status" value="1"/>
</dbReference>
<dbReference type="Gene3D" id="1.10.1140.10">
    <property type="entry name" value="Bovine Mitochondrial F1-atpase, Atp Synthase Beta Chain, Chain D, domain 3"/>
    <property type="match status" value="1"/>
</dbReference>
<dbReference type="Gene3D" id="3.40.50.300">
    <property type="entry name" value="P-loop containing nucleotide triphosphate hydrolases"/>
    <property type="match status" value="1"/>
</dbReference>
<dbReference type="HAMAP" id="MF_01347">
    <property type="entry name" value="ATP_synth_beta_bact"/>
    <property type="match status" value="1"/>
</dbReference>
<dbReference type="InterPro" id="IPR003593">
    <property type="entry name" value="AAA+_ATPase"/>
</dbReference>
<dbReference type="InterPro" id="IPR055190">
    <property type="entry name" value="ATP-synt_VA_C"/>
</dbReference>
<dbReference type="InterPro" id="IPR005722">
    <property type="entry name" value="ATP_synth_F1_bsu"/>
</dbReference>
<dbReference type="InterPro" id="IPR020003">
    <property type="entry name" value="ATPase_a/bsu_AS"/>
</dbReference>
<dbReference type="InterPro" id="IPR050053">
    <property type="entry name" value="ATPase_alpha/beta_chains"/>
</dbReference>
<dbReference type="InterPro" id="IPR004100">
    <property type="entry name" value="ATPase_F1/V1/A1_a/bsu_N"/>
</dbReference>
<dbReference type="InterPro" id="IPR036121">
    <property type="entry name" value="ATPase_F1/V1/A1_a/bsu_N_sf"/>
</dbReference>
<dbReference type="InterPro" id="IPR000194">
    <property type="entry name" value="ATPase_F1/V1/A1_a/bsu_nucl-bd"/>
</dbReference>
<dbReference type="InterPro" id="IPR024034">
    <property type="entry name" value="ATPase_F1/V1_b/a_C"/>
</dbReference>
<dbReference type="InterPro" id="IPR027417">
    <property type="entry name" value="P-loop_NTPase"/>
</dbReference>
<dbReference type="NCBIfam" id="TIGR01039">
    <property type="entry name" value="atpD"/>
    <property type="match status" value="1"/>
</dbReference>
<dbReference type="PANTHER" id="PTHR15184">
    <property type="entry name" value="ATP SYNTHASE"/>
    <property type="match status" value="1"/>
</dbReference>
<dbReference type="PANTHER" id="PTHR15184:SF71">
    <property type="entry name" value="ATP SYNTHASE SUBUNIT BETA, MITOCHONDRIAL"/>
    <property type="match status" value="1"/>
</dbReference>
<dbReference type="Pfam" id="PF00006">
    <property type="entry name" value="ATP-synt_ab"/>
    <property type="match status" value="1"/>
</dbReference>
<dbReference type="Pfam" id="PF02874">
    <property type="entry name" value="ATP-synt_ab_N"/>
    <property type="match status" value="1"/>
</dbReference>
<dbReference type="Pfam" id="PF22919">
    <property type="entry name" value="ATP-synt_VA_C"/>
    <property type="match status" value="1"/>
</dbReference>
<dbReference type="SMART" id="SM00382">
    <property type="entry name" value="AAA"/>
    <property type="match status" value="1"/>
</dbReference>
<dbReference type="SUPFAM" id="SSF47917">
    <property type="entry name" value="C-terminal domain of alpha and beta subunits of F1 ATP synthase"/>
    <property type="match status" value="1"/>
</dbReference>
<dbReference type="SUPFAM" id="SSF50615">
    <property type="entry name" value="N-terminal domain of alpha and beta subunits of F1 ATP synthase"/>
    <property type="match status" value="1"/>
</dbReference>
<dbReference type="SUPFAM" id="SSF52540">
    <property type="entry name" value="P-loop containing nucleoside triphosphate hydrolases"/>
    <property type="match status" value="1"/>
</dbReference>
<dbReference type="PROSITE" id="PS00152">
    <property type="entry name" value="ATPASE_ALPHA_BETA"/>
    <property type="match status" value="1"/>
</dbReference>
<sequence length="459" mass="50180">MVEGKIVQCIGAVIDVEFPRESMPKIYDALILEGSELTLEVQQQLGDGVVRTICLGASDGLRRGVVVKNTGNPISVPVGKPTLGRIMDVLGRPIDEAGPIESENKRSIHQKAPAFDELSPSTELLETGIKVIDLICPFAKGGKVGLFGGAGVGKTVNMMELINNIAKEHGGYSVFAGVGERTREGNDFYHEMKDSNVLDKVALVYGQMNEPPGNRLRVALTGLTMAEHFRDEGLDVLFFVDNIYRFTLAGTEVSALLGRMPSAVGYQPTLAEEMGKLQERITSTKKGSITSVQAVYVPADDLTDPSPATTFGHLDATVVLSRDIASLGIYPAVDPLDSTSRQIDPNVIGEEHYSITRRVQQTLQRYKELRDIIAILGMDELSPEDKLSVARARKIQRFLSQPFHVAEVFTGSPGKYVPLKETIRGFKMIVDGECDHLPEQAFYMVGTIDEAFEKAKKIQ</sequence>
<proteinExistence type="inferred from homology"/>
<comment type="function">
    <text evidence="1">Produces ATP from ADP in the presence of a proton gradient across the membrane. The catalytic sites are hosted primarily by the beta subunits.</text>
</comment>
<comment type="catalytic activity">
    <reaction evidence="1">
        <text>ATP + H2O + 4 H(+)(in) = ADP + phosphate + 5 H(+)(out)</text>
        <dbReference type="Rhea" id="RHEA:57720"/>
        <dbReference type="ChEBI" id="CHEBI:15377"/>
        <dbReference type="ChEBI" id="CHEBI:15378"/>
        <dbReference type="ChEBI" id="CHEBI:30616"/>
        <dbReference type="ChEBI" id="CHEBI:43474"/>
        <dbReference type="ChEBI" id="CHEBI:456216"/>
        <dbReference type="EC" id="7.1.2.2"/>
    </reaction>
</comment>
<comment type="subunit">
    <text evidence="1">F-type ATPases have 2 components, CF(1) - the catalytic core - and CF(0) - the membrane proton channel. CF(1) has five subunits: alpha(3), beta(3), gamma(1), delta(1), epsilon(1). CF(0) has three main subunits: a(1), b(2) and c(9-12). The alpha and beta chains form an alternating ring which encloses part of the gamma chain. CF(1) is attached to CF(0) by a central stalk formed by the gamma and epsilon chains, while a peripheral stalk is formed by the delta and b chains.</text>
</comment>
<comment type="subcellular location">
    <subcellularLocation>
        <location evidence="1">Cell inner membrane</location>
        <topology evidence="1">Peripheral membrane protein</topology>
    </subcellularLocation>
</comment>
<comment type="similarity">
    <text evidence="1">Belongs to the ATPase alpha/beta chains family.</text>
</comment>
<evidence type="ECO:0000255" key="1">
    <source>
        <dbReference type="HAMAP-Rule" id="MF_01347"/>
    </source>
</evidence>
<keyword id="KW-0066">ATP synthesis</keyword>
<keyword id="KW-0067">ATP-binding</keyword>
<keyword id="KW-0997">Cell inner membrane</keyword>
<keyword id="KW-1003">Cell membrane</keyword>
<keyword id="KW-0139">CF(1)</keyword>
<keyword id="KW-0375">Hydrogen ion transport</keyword>
<keyword id="KW-0406">Ion transport</keyword>
<keyword id="KW-0472">Membrane</keyword>
<keyword id="KW-0547">Nucleotide-binding</keyword>
<keyword id="KW-1278">Translocase</keyword>
<keyword id="KW-0813">Transport</keyword>
<organism>
    <name type="scientific">Burkholderia mallei (strain NCTC 10229)</name>
    <dbReference type="NCBI Taxonomy" id="412022"/>
    <lineage>
        <taxon>Bacteria</taxon>
        <taxon>Pseudomonadati</taxon>
        <taxon>Pseudomonadota</taxon>
        <taxon>Betaproteobacteria</taxon>
        <taxon>Burkholderiales</taxon>
        <taxon>Burkholderiaceae</taxon>
        <taxon>Burkholderia</taxon>
        <taxon>pseudomallei group</taxon>
    </lineage>
</organism>
<feature type="chain" id="PRO_0000339487" description="ATP synthase subunit beta">
    <location>
        <begin position="1"/>
        <end position="459"/>
    </location>
</feature>
<feature type="binding site" evidence="1">
    <location>
        <begin position="148"/>
        <end position="155"/>
    </location>
    <ligand>
        <name>ATP</name>
        <dbReference type="ChEBI" id="CHEBI:30616"/>
    </ligand>
</feature>
<accession>A2S6J8</accession>
<name>ATPB_BURM9</name>
<reference key="1">
    <citation type="journal article" date="2010" name="Genome Biol. Evol.">
        <title>Continuing evolution of Burkholderia mallei through genome reduction and large-scale rearrangements.</title>
        <authorList>
            <person name="Losada L."/>
            <person name="Ronning C.M."/>
            <person name="DeShazer D."/>
            <person name="Woods D."/>
            <person name="Fedorova N."/>
            <person name="Kim H.S."/>
            <person name="Shabalina S.A."/>
            <person name="Pearson T.R."/>
            <person name="Brinkac L."/>
            <person name="Tan P."/>
            <person name="Nandi T."/>
            <person name="Crabtree J."/>
            <person name="Badger J."/>
            <person name="Beckstrom-Sternberg S."/>
            <person name="Saqib M."/>
            <person name="Schutzer S.E."/>
            <person name="Keim P."/>
            <person name="Nierman W.C."/>
        </authorList>
    </citation>
    <scope>NUCLEOTIDE SEQUENCE [LARGE SCALE GENOMIC DNA]</scope>
    <source>
        <strain>NCTC 10229</strain>
    </source>
</reference>